<feature type="chain" id="PRO_1000191124" description="Adenylate kinase">
    <location>
        <begin position="1"/>
        <end position="210"/>
    </location>
</feature>
<feature type="region of interest" description="NMP" evidence="1">
    <location>
        <begin position="30"/>
        <end position="59"/>
    </location>
</feature>
<feature type="region of interest" description="LID" evidence="1">
    <location>
        <begin position="121"/>
        <end position="158"/>
    </location>
</feature>
<feature type="binding site" evidence="1">
    <location>
        <begin position="10"/>
        <end position="15"/>
    </location>
    <ligand>
        <name>ATP</name>
        <dbReference type="ChEBI" id="CHEBI:30616"/>
    </ligand>
</feature>
<feature type="binding site" evidence="1">
    <location>
        <position position="31"/>
    </location>
    <ligand>
        <name>AMP</name>
        <dbReference type="ChEBI" id="CHEBI:456215"/>
    </ligand>
</feature>
<feature type="binding site" evidence="1">
    <location>
        <position position="36"/>
    </location>
    <ligand>
        <name>AMP</name>
        <dbReference type="ChEBI" id="CHEBI:456215"/>
    </ligand>
</feature>
<feature type="binding site" evidence="1">
    <location>
        <begin position="57"/>
        <end position="59"/>
    </location>
    <ligand>
        <name>AMP</name>
        <dbReference type="ChEBI" id="CHEBI:456215"/>
    </ligand>
</feature>
<feature type="binding site" evidence="1">
    <location>
        <begin position="85"/>
        <end position="88"/>
    </location>
    <ligand>
        <name>AMP</name>
        <dbReference type="ChEBI" id="CHEBI:456215"/>
    </ligand>
</feature>
<feature type="binding site" evidence="1">
    <location>
        <position position="92"/>
    </location>
    <ligand>
        <name>AMP</name>
        <dbReference type="ChEBI" id="CHEBI:456215"/>
    </ligand>
</feature>
<feature type="binding site" evidence="1">
    <location>
        <position position="122"/>
    </location>
    <ligand>
        <name>ATP</name>
        <dbReference type="ChEBI" id="CHEBI:30616"/>
    </ligand>
</feature>
<feature type="binding site" evidence="1">
    <location>
        <position position="125"/>
    </location>
    <ligand>
        <name>Zn(2+)</name>
        <dbReference type="ChEBI" id="CHEBI:29105"/>
        <note>structural</note>
    </ligand>
</feature>
<feature type="binding site" evidence="1">
    <location>
        <position position="128"/>
    </location>
    <ligand>
        <name>Zn(2+)</name>
        <dbReference type="ChEBI" id="CHEBI:29105"/>
        <note>structural</note>
    </ligand>
</feature>
<feature type="binding site" evidence="1">
    <location>
        <begin position="131"/>
        <end position="132"/>
    </location>
    <ligand>
        <name>ATP</name>
        <dbReference type="ChEBI" id="CHEBI:30616"/>
    </ligand>
</feature>
<feature type="binding site" evidence="1">
    <location>
        <position position="145"/>
    </location>
    <ligand>
        <name>Zn(2+)</name>
        <dbReference type="ChEBI" id="CHEBI:29105"/>
        <note>structural</note>
    </ligand>
</feature>
<feature type="binding site" evidence="1">
    <location>
        <position position="148"/>
    </location>
    <ligand>
        <name>Zn(2+)</name>
        <dbReference type="ChEBI" id="CHEBI:29105"/>
        <note>structural</note>
    </ligand>
</feature>
<feature type="binding site" evidence="1">
    <location>
        <position position="155"/>
    </location>
    <ligand>
        <name>AMP</name>
        <dbReference type="ChEBI" id="CHEBI:456215"/>
    </ligand>
</feature>
<feature type="binding site" evidence="1">
    <location>
        <position position="166"/>
    </location>
    <ligand>
        <name>AMP</name>
        <dbReference type="ChEBI" id="CHEBI:456215"/>
    </ligand>
</feature>
<feature type="binding site" evidence="1">
    <location>
        <position position="194"/>
    </location>
    <ligand>
        <name>ATP</name>
        <dbReference type="ChEBI" id="CHEBI:30616"/>
    </ligand>
</feature>
<organism>
    <name type="scientific">Borrelia turicatae (strain 91E135)</name>
    <dbReference type="NCBI Taxonomy" id="314724"/>
    <lineage>
        <taxon>Bacteria</taxon>
        <taxon>Pseudomonadati</taxon>
        <taxon>Spirochaetota</taxon>
        <taxon>Spirochaetia</taxon>
        <taxon>Spirochaetales</taxon>
        <taxon>Borreliaceae</taxon>
        <taxon>Borrelia</taxon>
    </lineage>
</organism>
<protein>
    <recommendedName>
        <fullName evidence="1">Adenylate kinase</fullName>
        <shortName evidence="1">AK</shortName>
        <ecNumber evidence="1">2.7.4.3</ecNumber>
    </recommendedName>
    <alternativeName>
        <fullName evidence="1">ATP-AMP transphosphorylase</fullName>
    </alternativeName>
    <alternativeName>
        <fullName evidence="1">ATP:AMP phosphotransferase</fullName>
    </alternativeName>
    <alternativeName>
        <fullName evidence="1">Adenylate monophosphate kinase</fullName>
    </alternativeName>
</protein>
<comment type="function">
    <text evidence="1">Catalyzes the reversible transfer of the terminal phosphate group between ATP and AMP. Plays an important role in cellular energy homeostasis and in adenine nucleotide metabolism.</text>
</comment>
<comment type="catalytic activity">
    <reaction evidence="1">
        <text>AMP + ATP = 2 ADP</text>
        <dbReference type="Rhea" id="RHEA:12973"/>
        <dbReference type="ChEBI" id="CHEBI:30616"/>
        <dbReference type="ChEBI" id="CHEBI:456215"/>
        <dbReference type="ChEBI" id="CHEBI:456216"/>
        <dbReference type="EC" id="2.7.4.3"/>
    </reaction>
</comment>
<comment type="pathway">
    <text evidence="1">Purine metabolism; AMP biosynthesis via salvage pathway; AMP from ADP: step 1/1.</text>
</comment>
<comment type="subunit">
    <text evidence="1">Monomer.</text>
</comment>
<comment type="subcellular location">
    <subcellularLocation>
        <location evidence="1">Cytoplasm</location>
    </subcellularLocation>
</comment>
<comment type="domain">
    <text evidence="1">Consists of three domains, a large central CORE domain and two small peripheral domains, NMPbind and LID, which undergo movements during catalysis. The LID domain closes over the site of phosphoryl transfer upon ATP binding. Assembling and dissambling the active center during each catalytic cycle provides an effective means to prevent ATP hydrolysis. Some bacteria have evolved a zinc-coordinating structure that stabilizes the LID domain.</text>
</comment>
<comment type="similarity">
    <text evidence="1">Belongs to the adenylate kinase family.</text>
</comment>
<gene>
    <name evidence="1" type="primary">adk</name>
    <name type="ordered locus">BT0417</name>
</gene>
<keyword id="KW-0067">ATP-binding</keyword>
<keyword id="KW-0963">Cytoplasm</keyword>
<keyword id="KW-0418">Kinase</keyword>
<keyword id="KW-0479">Metal-binding</keyword>
<keyword id="KW-0545">Nucleotide biosynthesis</keyword>
<keyword id="KW-0547">Nucleotide-binding</keyword>
<keyword id="KW-1185">Reference proteome</keyword>
<keyword id="KW-0808">Transferase</keyword>
<keyword id="KW-0862">Zinc</keyword>
<evidence type="ECO:0000255" key="1">
    <source>
        <dbReference type="HAMAP-Rule" id="MF_00235"/>
    </source>
</evidence>
<dbReference type="EC" id="2.7.4.3" evidence="1"/>
<dbReference type="EMBL" id="CP000049">
    <property type="protein sequence ID" value="AAX17745.1"/>
    <property type="molecule type" value="Genomic_DNA"/>
</dbReference>
<dbReference type="RefSeq" id="WP_011772364.1">
    <property type="nucleotide sequence ID" value="NZ_CP073176.1"/>
</dbReference>
<dbReference type="SMR" id="A1QZK3"/>
<dbReference type="KEGG" id="btu:BT0417"/>
<dbReference type="eggNOG" id="COG0563">
    <property type="taxonomic scope" value="Bacteria"/>
</dbReference>
<dbReference type="HOGENOM" id="CLU_032354_1_1_12"/>
<dbReference type="UniPathway" id="UPA00588">
    <property type="reaction ID" value="UER00649"/>
</dbReference>
<dbReference type="Proteomes" id="UP000001205">
    <property type="component" value="Chromosome"/>
</dbReference>
<dbReference type="GO" id="GO:0005737">
    <property type="term" value="C:cytoplasm"/>
    <property type="evidence" value="ECO:0007669"/>
    <property type="project" value="UniProtKB-SubCell"/>
</dbReference>
<dbReference type="GO" id="GO:0004017">
    <property type="term" value="F:adenylate kinase activity"/>
    <property type="evidence" value="ECO:0007669"/>
    <property type="project" value="UniProtKB-UniRule"/>
</dbReference>
<dbReference type="GO" id="GO:0005524">
    <property type="term" value="F:ATP binding"/>
    <property type="evidence" value="ECO:0007669"/>
    <property type="project" value="UniProtKB-UniRule"/>
</dbReference>
<dbReference type="GO" id="GO:0008270">
    <property type="term" value="F:zinc ion binding"/>
    <property type="evidence" value="ECO:0007669"/>
    <property type="project" value="UniProtKB-UniRule"/>
</dbReference>
<dbReference type="GO" id="GO:0044209">
    <property type="term" value="P:AMP salvage"/>
    <property type="evidence" value="ECO:0007669"/>
    <property type="project" value="UniProtKB-UniRule"/>
</dbReference>
<dbReference type="CDD" id="cd01428">
    <property type="entry name" value="ADK"/>
    <property type="match status" value="1"/>
</dbReference>
<dbReference type="FunFam" id="3.40.50.300:FF:000106">
    <property type="entry name" value="Adenylate kinase mitochondrial"/>
    <property type="match status" value="1"/>
</dbReference>
<dbReference type="Gene3D" id="3.40.50.300">
    <property type="entry name" value="P-loop containing nucleotide triphosphate hydrolases"/>
    <property type="match status" value="1"/>
</dbReference>
<dbReference type="HAMAP" id="MF_00235">
    <property type="entry name" value="Adenylate_kinase_Adk"/>
    <property type="match status" value="1"/>
</dbReference>
<dbReference type="InterPro" id="IPR006259">
    <property type="entry name" value="Adenyl_kin_sub"/>
</dbReference>
<dbReference type="InterPro" id="IPR000850">
    <property type="entry name" value="Adenylat/UMP-CMP_kin"/>
</dbReference>
<dbReference type="InterPro" id="IPR033690">
    <property type="entry name" value="Adenylat_kinase_CS"/>
</dbReference>
<dbReference type="InterPro" id="IPR007862">
    <property type="entry name" value="Adenylate_kinase_lid-dom"/>
</dbReference>
<dbReference type="InterPro" id="IPR027417">
    <property type="entry name" value="P-loop_NTPase"/>
</dbReference>
<dbReference type="NCBIfam" id="TIGR01351">
    <property type="entry name" value="adk"/>
    <property type="match status" value="1"/>
</dbReference>
<dbReference type="NCBIfam" id="NF001380">
    <property type="entry name" value="PRK00279.1-2"/>
    <property type="match status" value="1"/>
</dbReference>
<dbReference type="NCBIfam" id="NF001381">
    <property type="entry name" value="PRK00279.1-3"/>
    <property type="match status" value="1"/>
</dbReference>
<dbReference type="NCBIfam" id="NF011099">
    <property type="entry name" value="PRK14526.1"/>
    <property type="match status" value="1"/>
</dbReference>
<dbReference type="PANTHER" id="PTHR23359">
    <property type="entry name" value="NUCLEOTIDE KINASE"/>
    <property type="match status" value="1"/>
</dbReference>
<dbReference type="Pfam" id="PF00406">
    <property type="entry name" value="ADK"/>
    <property type="match status" value="1"/>
</dbReference>
<dbReference type="Pfam" id="PF05191">
    <property type="entry name" value="ADK_lid"/>
    <property type="match status" value="1"/>
</dbReference>
<dbReference type="PRINTS" id="PR00094">
    <property type="entry name" value="ADENYLTKNASE"/>
</dbReference>
<dbReference type="SUPFAM" id="SSF52540">
    <property type="entry name" value="P-loop containing nucleoside triphosphate hydrolases"/>
    <property type="match status" value="1"/>
</dbReference>
<dbReference type="PROSITE" id="PS00113">
    <property type="entry name" value="ADENYLATE_KINASE"/>
    <property type="match status" value="1"/>
</dbReference>
<name>KAD_BORT9</name>
<reference key="1">
    <citation type="submission" date="2004-12" db="EMBL/GenBank/DDBJ databases">
        <title>The genome sequence of Borrelia hermsii and Borrelia turicatae: comparative analysis of two agents of endemic N. America relapsing fever.</title>
        <authorList>
            <person name="Porcella S.F."/>
            <person name="Raffel S.J."/>
            <person name="Schrumpf M.E."/>
            <person name="Montgomery B."/>
            <person name="Smith T."/>
            <person name="Schwan T.G."/>
        </authorList>
    </citation>
    <scope>NUCLEOTIDE SEQUENCE [LARGE SCALE GENOMIC DNA]</scope>
    <source>
        <strain>91E135</strain>
    </source>
</reference>
<accession>A1QZK3</accession>
<proteinExistence type="inferred from homology"/>
<sequence length="210" mass="23602">MKLVFLGPPGSGKGTIAKILSGKLNYYHISTGDLFRANISNATPLGKEIKQIVENGQLVPDSITIKIVEDKINTLANKDNFILDGFPRNINQAKALDTFLQNIQIINFLLDEAILIKRLSGRRICQSCGGIFNIYTLPTKEKGICDLCKGSLYQRKDDVEESLKIRLQEYHLQTKPLIDFYSKNNRLNNINASKDIDGVEKSLIEIISKY</sequence>